<comment type="function">
    <text evidence="1">Catalyzes carboxymethyl transfer from carboxy-S-adenosyl-L-methionine (Cx-SAM) to 5-hydroxyuridine (ho5U) to form 5-carboxymethoxyuridine (cmo5U) at position 34 in tRNAs.</text>
</comment>
<comment type="catalytic activity">
    <reaction evidence="1">
        <text>carboxy-S-adenosyl-L-methionine + 5-hydroxyuridine(34) in tRNA = 5-carboxymethoxyuridine(34) in tRNA + S-adenosyl-L-homocysteine + H(+)</text>
        <dbReference type="Rhea" id="RHEA:52848"/>
        <dbReference type="Rhea" id="RHEA-COMP:13381"/>
        <dbReference type="Rhea" id="RHEA-COMP:13383"/>
        <dbReference type="ChEBI" id="CHEBI:15378"/>
        <dbReference type="ChEBI" id="CHEBI:57856"/>
        <dbReference type="ChEBI" id="CHEBI:134278"/>
        <dbReference type="ChEBI" id="CHEBI:136877"/>
        <dbReference type="ChEBI" id="CHEBI:136879"/>
    </reaction>
</comment>
<comment type="subunit">
    <text evidence="1">Homotetramer.</text>
</comment>
<comment type="similarity">
    <text evidence="1">Belongs to the class I-like SAM-binding methyltransferase superfamily. CmoB family.</text>
</comment>
<reference key="1">
    <citation type="submission" date="2006-09" db="EMBL/GenBank/DDBJ databases">
        <authorList>
            <consortium name="The Klebsiella pneumonia Genome Sequencing Project"/>
            <person name="McClelland M."/>
            <person name="Sanderson E.K."/>
            <person name="Spieth J."/>
            <person name="Clifton W.S."/>
            <person name="Latreille P."/>
            <person name="Sabo A."/>
            <person name="Pepin K."/>
            <person name="Bhonagiri V."/>
            <person name="Porwollik S."/>
            <person name="Ali J."/>
            <person name="Wilson R.K."/>
        </authorList>
    </citation>
    <scope>NUCLEOTIDE SEQUENCE [LARGE SCALE GENOMIC DNA]</scope>
    <source>
        <strain>ATCC 700721 / MGH 78578</strain>
    </source>
</reference>
<feature type="chain" id="PRO_0000313933" description="tRNA U34 carboxymethyltransferase">
    <location>
        <begin position="1"/>
        <end position="334"/>
    </location>
</feature>
<feature type="binding site" evidence="1">
    <location>
        <position position="91"/>
    </location>
    <ligand>
        <name>carboxy-S-adenosyl-L-methionine</name>
        <dbReference type="ChEBI" id="CHEBI:134278"/>
    </ligand>
</feature>
<feature type="binding site" evidence="1">
    <location>
        <position position="105"/>
    </location>
    <ligand>
        <name>carboxy-S-adenosyl-L-methionine</name>
        <dbReference type="ChEBI" id="CHEBI:134278"/>
    </ligand>
</feature>
<feature type="binding site" evidence="1">
    <location>
        <position position="110"/>
    </location>
    <ligand>
        <name>carboxy-S-adenosyl-L-methionine</name>
        <dbReference type="ChEBI" id="CHEBI:134278"/>
    </ligand>
</feature>
<feature type="binding site" evidence="1">
    <location>
        <position position="130"/>
    </location>
    <ligand>
        <name>carboxy-S-adenosyl-L-methionine</name>
        <dbReference type="ChEBI" id="CHEBI:134278"/>
    </ligand>
</feature>
<feature type="binding site" evidence="1">
    <location>
        <begin position="152"/>
        <end position="154"/>
    </location>
    <ligand>
        <name>carboxy-S-adenosyl-L-methionine</name>
        <dbReference type="ChEBI" id="CHEBI:134278"/>
    </ligand>
</feature>
<feature type="binding site" evidence="1">
    <location>
        <begin position="181"/>
        <end position="182"/>
    </location>
    <ligand>
        <name>carboxy-S-adenosyl-L-methionine</name>
        <dbReference type="ChEBI" id="CHEBI:134278"/>
    </ligand>
</feature>
<feature type="binding site" evidence="1">
    <location>
        <position position="196"/>
    </location>
    <ligand>
        <name>carboxy-S-adenosyl-L-methionine</name>
        <dbReference type="ChEBI" id="CHEBI:134278"/>
    </ligand>
</feature>
<feature type="binding site" evidence="1">
    <location>
        <position position="200"/>
    </location>
    <ligand>
        <name>carboxy-S-adenosyl-L-methionine</name>
        <dbReference type="ChEBI" id="CHEBI:134278"/>
    </ligand>
</feature>
<feature type="binding site" evidence="1">
    <location>
        <position position="315"/>
    </location>
    <ligand>
        <name>carboxy-S-adenosyl-L-methionine</name>
        <dbReference type="ChEBI" id="CHEBI:134278"/>
    </ligand>
</feature>
<organism>
    <name type="scientific">Klebsiella pneumoniae subsp. pneumoniae (strain ATCC 700721 / MGH 78578)</name>
    <dbReference type="NCBI Taxonomy" id="272620"/>
    <lineage>
        <taxon>Bacteria</taxon>
        <taxon>Pseudomonadati</taxon>
        <taxon>Pseudomonadota</taxon>
        <taxon>Gammaproteobacteria</taxon>
        <taxon>Enterobacterales</taxon>
        <taxon>Enterobacteriaceae</taxon>
        <taxon>Klebsiella/Raoultella group</taxon>
        <taxon>Klebsiella</taxon>
        <taxon>Klebsiella pneumoniae complex</taxon>
    </lineage>
</organism>
<keyword id="KW-0808">Transferase</keyword>
<keyword id="KW-0819">tRNA processing</keyword>
<gene>
    <name evidence="1" type="primary">cmoB</name>
    <name type="ordered locus">KPN78578_23500</name>
    <name type="ORF">KPN_02385</name>
</gene>
<evidence type="ECO:0000255" key="1">
    <source>
        <dbReference type="HAMAP-Rule" id="MF_01590"/>
    </source>
</evidence>
<proteinExistence type="inferred from homology"/>
<protein>
    <recommendedName>
        <fullName evidence="1">tRNA U34 carboxymethyltransferase</fullName>
        <ecNumber evidence="1">2.5.1.-</ecNumber>
    </recommendedName>
</protein>
<name>CMOB_KLEP7</name>
<dbReference type="EC" id="2.5.1.-" evidence="1"/>
<dbReference type="EMBL" id="CP000647">
    <property type="protein sequence ID" value="ABR77811.1"/>
    <property type="molecule type" value="Genomic_DNA"/>
</dbReference>
<dbReference type="RefSeq" id="WP_004151451.1">
    <property type="nucleotide sequence ID" value="NC_009648.1"/>
</dbReference>
<dbReference type="SMR" id="A6TB40"/>
<dbReference type="STRING" id="272620.KPN_02385"/>
<dbReference type="jPOST" id="A6TB40"/>
<dbReference type="PaxDb" id="272620-KPN_02385"/>
<dbReference type="DNASU" id="5342535"/>
<dbReference type="EnsemblBacteria" id="ABR77811">
    <property type="protein sequence ID" value="ABR77811"/>
    <property type="gene ID" value="KPN_02385"/>
</dbReference>
<dbReference type="KEGG" id="kpn:KPN_02385"/>
<dbReference type="HOGENOM" id="CLU_052665_0_0_6"/>
<dbReference type="Proteomes" id="UP000000265">
    <property type="component" value="Chromosome"/>
</dbReference>
<dbReference type="GO" id="GO:0008168">
    <property type="term" value="F:methyltransferase activity"/>
    <property type="evidence" value="ECO:0007669"/>
    <property type="project" value="TreeGrafter"/>
</dbReference>
<dbReference type="GO" id="GO:0016765">
    <property type="term" value="F:transferase activity, transferring alkyl or aryl (other than methyl) groups"/>
    <property type="evidence" value="ECO:0007669"/>
    <property type="project" value="UniProtKB-UniRule"/>
</dbReference>
<dbReference type="GO" id="GO:0002098">
    <property type="term" value="P:tRNA wobble uridine modification"/>
    <property type="evidence" value="ECO:0007669"/>
    <property type="project" value="InterPro"/>
</dbReference>
<dbReference type="CDD" id="cd02440">
    <property type="entry name" value="AdoMet_MTases"/>
    <property type="match status" value="1"/>
</dbReference>
<dbReference type="FunFam" id="3.40.50.150:FF:000080">
    <property type="entry name" value="tRNA U34 carboxymethyltransferase"/>
    <property type="match status" value="1"/>
</dbReference>
<dbReference type="Gene3D" id="3.40.50.150">
    <property type="entry name" value="Vaccinia Virus protein VP39"/>
    <property type="match status" value="1"/>
</dbReference>
<dbReference type="HAMAP" id="MF_01590">
    <property type="entry name" value="tRNA_carboxymethyltr_CmoB"/>
    <property type="match status" value="1"/>
</dbReference>
<dbReference type="InterPro" id="IPR010017">
    <property type="entry name" value="CmoB"/>
</dbReference>
<dbReference type="InterPro" id="IPR027555">
    <property type="entry name" value="Mo5U34_MeTrfas-like"/>
</dbReference>
<dbReference type="InterPro" id="IPR029063">
    <property type="entry name" value="SAM-dependent_MTases_sf"/>
</dbReference>
<dbReference type="NCBIfam" id="NF011650">
    <property type="entry name" value="PRK15068.1"/>
    <property type="match status" value="1"/>
</dbReference>
<dbReference type="NCBIfam" id="TIGR00452">
    <property type="entry name" value="tRNA 5-methoxyuridine(34)/uridine 5-oxyacetic acid(34) synthase CmoB"/>
    <property type="match status" value="1"/>
</dbReference>
<dbReference type="PANTHER" id="PTHR43464">
    <property type="entry name" value="METHYLTRANSFERASE"/>
    <property type="match status" value="1"/>
</dbReference>
<dbReference type="PANTHER" id="PTHR43464:SF95">
    <property type="entry name" value="TRNA U34 CARBOXYMETHYLTRANSFERASE"/>
    <property type="match status" value="1"/>
</dbReference>
<dbReference type="Pfam" id="PF08003">
    <property type="entry name" value="Methyltransf_9"/>
    <property type="match status" value="1"/>
</dbReference>
<dbReference type="SUPFAM" id="SSF53335">
    <property type="entry name" value="S-adenosyl-L-methionine-dependent methyltransferases"/>
    <property type="match status" value="1"/>
</dbReference>
<sequence>MIDFSNFYQLIAKSPLSHWLETLPAQVAAWQRDALHGKFREWERAVEFLPELTPWRLDLLHSVTAESETPLSEGHQRRIENLLKNLMPWRKGPYSLYGINIDTEWRSDWKWERVLPHLSDLTGRTILDVGCGSGYHMWRMIGAGAHLAVGIDPTQLFLCQFEAVRKLLGNDQRAHLLPLGIEQLPALEAFDTVFSMGVLYHRRSPLDHLWQLKDQLAPGGELVLETLVVEGDENTVLVPGDRYAQMRNVYFIPSAAALKMWLEKCGFIDVRIVDACVTSTEEQRRTEWMTTESLADFLDPQDQRKTVEGYPAPLRAVIIATKPETQQSLAKKAR</sequence>
<accession>A6TB40</accession>